<evidence type="ECO:0000250" key="1">
    <source>
        <dbReference type="UniProtKB" id="P50336"/>
    </source>
</evidence>
<evidence type="ECO:0000269" key="2">
    <source>
    </source>
</evidence>
<evidence type="ECO:0000269" key="3">
    <source>
    </source>
</evidence>
<evidence type="ECO:0000269" key="4">
    <source>
    </source>
</evidence>
<evidence type="ECO:0000305" key="5"/>
<proteinExistence type="evidence at protein level"/>
<keyword id="KW-0274">FAD</keyword>
<keyword id="KW-0285">Flavoprotein</keyword>
<keyword id="KW-0350">Heme biosynthesis</keyword>
<keyword id="KW-0472">Membrane</keyword>
<keyword id="KW-0496">Mitochondrion</keyword>
<keyword id="KW-0999">Mitochondrion inner membrane</keyword>
<keyword id="KW-0560">Oxidoreductase</keyword>
<keyword id="KW-0627">Porphyrin biosynthesis</keyword>
<keyword id="KW-1185">Reference proteome</keyword>
<organism>
    <name type="scientific">Mus musculus</name>
    <name type="common">Mouse</name>
    <dbReference type="NCBI Taxonomy" id="10090"/>
    <lineage>
        <taxon>Eukaryota</taxon>
        <taxon>Metazoa</taxon>
        <taxon>Chordata</taxon>
        <taxon>Craniata</taxon>
        <taxon>Vertebrata</taxon>
        <taxon>Euteleostomi</taxon>
        <taxon>Mammalia</taxon>
        <taxon>Eutheria</taxon>
        <taxon>Euarchontoglires</taxon>
        <taxon>Glires</taxon>
        <taxon>Rodentia</taxon>
        <taxon>Myomorpha</taxon>
        <taxon>Muroidea</taxon>
        <taxon>Muridae</taxon>
        <taxon>Murinae</taxon>
        <taxon>Mus</taxon>
        <taxon>Mus</taxon>
    </lineage>
</organism>
<gene>
    <name type="primary">Ppox</name>
</gene>
<name>PPOX_MOUSE</name>
<feature type="chain" id="PRO_0000135272" description="Protoporphyrinogen oxidase">
    <location>
        <begin position="1"/>
        <end position="477"/>
    </location>
</feature>
<feature type="binding site" evidence="1">
    <location>
        <begin position="9"/>
        <end position="14"/>
    </location>
    <ligand>
        <name>FAD</name>
        <dbReference type="ChEBI" id="CHEBI:57692"/>
    </ligand>
</feature>
<feature type="binding site" evidence="1">
    <location>
        <position position="42"/>
    </location>
    <ligand>
        <name>FAD</name>
        <dbReference type="ChEBI" id="CHEBI:57692"/>
    </ligand>
</feature>
<feature type="binding site" evidence="1">
    <location>
        <begin position="57"/>
        <end position="60"/>
    </location>
    <ligand>
        <name>FAD</name>
        <dbReference type="ChEBI" id="CHEBI:57692"/>
    </ligand>
</feature>
<feature type="binding site" evidence="1">
    <location>
        <position position="257"/>
    </location>
    <ligand>
        <name>FAD</name>
        <dbReference type="ChEBI" id="CHEBI:57692"/>
    </ligand>
</feature>
<feature type="binding site" evidence="1">
    <location>
        <position position="449"/>
    </location>
    <ligand>
        <name>FAD</name>
        <dbReference type="ChEBI" id="CHEBI:57692"/>
    </ligand>
</feature>
<feature type="binding site" evidence="1">
    <location>
        <begin position="454"/>
        <end position="456"/>
    </location>
    <ligand>
        <name>FAD</name>
        <dbReference type="ChEBI" id="CHEBI:57692"/>
    </ligand>
</feature>
<feature type="sequence conflict" description="In Ref. 2." evidence="5" ref="2">
    <original>A</original>
    <variation>T</variation>
    <location>
        <position position="64"/>
    </location>
</feature>
<feature type="sequence conflict" description="In Ref. 2." evidence="5" ref="2">
    <original>A</original>
    <variation>P</variation>
    <location>
        <position position="66"/>
    </location>
</feature>
<feature type="sequence conflict" description="In Ref. 2; BAA08126." evidence="5" ref="2">
    <original>L</original>
    <variation>S</variation>
    <location>
        <position position="108"/>
    </location>
</feature>
<feature type="sequence conflict" description="In Ref. 3; AAH02047." evidence="5" ref="3">
    <original>R</original>
    <variation>Q</variation>
    <location>
        <position position="176"/>
    </location>
</feature>
<feature type="sequence conflict" description="In Ref. 2; BAA08126." evidence="5" ref="2">
    <original>W</original>
    <variation>C</variation>
    <location>
        <position position="427"/>
    </location>
</feature>
<comment type="function">
    <text evidence="4">Catalyzes the 6-electron oxidation of protoporphyrinogen-IX to form protoporphyrin-IX.</text>
</comment>
<comment type="catalytic activity">
    <reaction evidence="4">
        <text>protoporphyrinogen IX + 3 O2 = protoporphyrin IX + 3 H2O2</text>
        <dbReference type="Rhea" id="RHEA:25576"/>
        <dbReference type="ChEBI" id="CHEBI:15379"/>
        <dbReference type="ChEBI" id="CHEBI:16240"/>
        <dbReference type="ChEBI" id="CHEBI:57306"/>
        <dbReference type="ChEBI" id="CHEBI:57307"/>
        <dbReference type="EC" id="1.3.3.4"/>
    </reaction>
</comment>
<comment type="cofactor">
    <cofactor evidence="1">
        <name>FAD</name>
        <dbReference type="ChEBI" id="CHEBI:57692"/>
    </cofactor>
    <text evidence="1">Binds 1 FAD per subunit.</text>
</comment>
<comment type="activity regulation">
    <text evidence="4">Inhibited by acifluorfen.</text>
</comment>
<comment type="pathway">
    <text evidence="4">Porphyrin-containing compound metabolism; protoporphyrin-IX biosynthesis; protoporphyrin-IX from protoporphyrinogen-IX: step 1/1.</text>
</comment>
<comment type="subunit">
    <text evidence="1">Monomer. Homodimer.</text>
</comment>
<comment type="subcellular location">
    <subcellularLocation>
        <location evidence="2">Mitochondrion inner membrane</location>
        <topology evidence="2">Peripheral membrane protein</topology>
        <orientation evidence="2">Intermembrane side</orientation>
    </subcellularLocation>
</comment>
<comment type="induction">
    <text evidence="3">During erythroid differentiation.</text>
</comment>
<comment type="similarity">
    <text evidence="5">Belongs to the protoporphyrinogen/coproporphyrinogen oxidase family. Protoporphyrinogen oxidase subfamily.</text>
</comment>
<reference key="1">
    <citation type="journal article" date="1995" name="Arch. Biochem. Biophys.">
        <title>Cloning, sequence, and expression of mouse protoporphyrinogen oxidase.</title>
        <authorList>
            <person name="Dailey T.A."/>
            <person name="Dailey H.A."/>
            <person name="Meissner P."/>
            <person name="Prasad A.R."/>
        </authorList>
    </citation>
    <scope>NUCLEOTIDE SEQUENCE [MRNA]</scope>
    <scope>FUNCTION</scope>
    <scope>CATALYTIC ACTIVITY</scope>
    <scope>PATHWAY</scope>
    <scope>ACTIVITY REGULATION</scope>
</reference>
<reference key="2">
    <citation type="journal article" date="1995" name="Eur. J. Biochem.">
        <title>Induction of terminal enzymes for heme biosynthesis during differentiation of mouse erythroleukemia cells.</title>
        <authorList>
            <person name="Taketani S."/>
            <person name="Yoshinaga T."/>
            <person name="Furukawa T."/>
            <person name="Kohno H."/>
            <person name="Tokunaga R."/>
            <person name="Nishimura K."/>
            <person name="Inokuchi H."/>
        </authorList>
    </citation>
    <scope>NUCLEOTIDE SEQUENCE [MRNA]</scope>
    <scope>INDUCTION</scope>
    <source>
        <tissue>Erythroleukemia</tissue>
    </source>
</reference>
<reference key="3">
    <citation type="journal article" date="2004" name="Genome Res.">
        <title>The status, quality, and expansion of the NIH full-length cDNA project: the Mammalian Gene Collection (MGC).</title>
        <authorList>
            <consortium name="The MGC Project Team"/>
        </authorList>
    </citation>
    <scope>NUCLEOTIDE SEQUENCE [LARGE SCALE MRNA]</scope>
    <source>
        <tissue>Mammary gland</tissue>
    </source>
</reference>
<reference key="4">
    <citation type="journal article" date="1988" name="J. Biol. Chem.">
        <title>Organization of the terminal two enzymes of the heme biosynthetic pathway. Orientation of protoporphyrinogen oxidase and evidence for a membrane complex.</title>
        <authorList>
            <person name="Ferreira G.C."/>
            <person name="Andrew T.L."/>
            <person name="Karr S.W."/>
            <person name="Dailey H.A."/>
        </authorList>
    </citation>
    <scope>SUBCELLULAR LOCATION</scope>
    <source>
        <tissue>Liver</tissue>
    </source>
</reference>
<reference key="5">
    <citation type="journal article" date="2010" name="Cell">
        <title>A tissue-specific atlas of mouse protein phosphorylation and expression.</title>
        <authorList>
            <person name="Huttlin E.L."/>
            <person name="Jedrychowski M.P."/>
            <person name="Elias J.E."/>
            <person name="Goswami T."/>
            <person name="Rad R."/>
            <person name="Beausoleil S.A."/>
            <person name="Villen J."/>
            <person name="Haas W."/>
            <person name="Sowa M.E."/>
            <person name="Gygi S.P."/>
        </authorList>
    </citation>
    <scope>IDENTIFICATION BY MASS SPECTROMETRY [LARGE SCALE ANALYSIS]</scope>
    <source>
        <tissue>Brain</tissue>
        <tissue>Brown adipose tissue</tissue>
        <tissue>Kidney</tissue>
        <tissue>Liver</tissue>
        <tissue>Pancreas</tissue>
        <tissue>Spleen</tissue>
        <tissue>Testis</tissue>
    </source>
</reference>
<accession>P51175</accession>
<accession>P97344</accession>
<accession>Q99M34</accession>
<sequence>MGRTVIVLGGGISGLAASYHLIRGPSPPKVILVEGSKRLGGWIRSIRGSDGAIFELGPRGIRPAGALGARTLLLVSELGLESEVLPVRGDHPAAQNRFLYVGGTLHPLPSGLRGLLRPSPPFSKPLFWAGLRELLKPRGKEPDETVHSFAQRRLGPEVASLAMDSLCRGVFAGNSRELSIRSCFPSLFQAEQTHRSILLGLLLGAGQSPQPDSSLIRQARAERWSQWSLRGGLEVLPQALHNHLASKGVTVLSGQPVCGLSLQPEGRWKVSLGDSSLEADHIISAIPASELSKLLPAEAAPLARILSTIKAVSVAVVNLQYRGACLPVQGFGHLVPSSEDPTVLGIVYDSVAFPEQDGNPPSLRVTVMLGGYWLQKLKAAGHQLSPELFQQQAQEAAATQLGLKEPPSHCLVHLHKNCIPQYTIGHWQKLDSAMQFLTAQRLPLTLAGASYEGVAVNDCIESGRQAAVAVLGTESNS</sequence>
<dbReference type="EC" id="1.3.3.4" evidence="4"/>
<dbReference type="EMBL" id="U25114">
    <property type="protein sequence ID" value="AAA96003.1"/>
    <property type="molecule type" value="mRNA"/>
</dbReference>
<dbReference type="EMBL" id="D45185">
    <property type="protein sequence ID" value="BAA08126.1"/>
    <property type="molecule type" value="mRNA"/>
</dbReference>
<dbReference type="EMBL" id="BC002047">
    <property type="protein sequence ID" value="AAH02047.1"/>
    <property type="molecule type" value="mRNA"/>
</dbReference>
<dbReference type="CCDS" id="CCDS15487.1"/>
<dbReference type="PIR" id="S65684">
    <property type="entry name" value="S65684"/>
</dbReference>
<dbReference type="PIR" id="S68367">
    <property type="entry name" value="S68367"/>
</dbReference>
<dbReference type="RefSeq" id="NP_032937.1">
    <property type="nucleotide sequence ID" value="NM_008911.2"/>
</dbReference>
<dbReference type="RefSeq" id="XP_006496770.1">
    <property type="nucleotide sequence ID" value="XM_006496707.4"/>
</dbReference>
<dbReference type="SMR" id="P51175"/>
<dbReference type="BioGRID" id="202334">
    <property type="interactions" value="2"/>
</dbReference>
<dbReference type="FunCoup" id="P51175">
    <property type="interactions" value="2391"/>
</dbReference>
<dbReference type="IntAct" id="P51175">
    <property type="interactions" value="4"/>
</dbReference>
<dbReference type="STRING" id="10090.ENSMUSP00000072863"/>
<dbReference type="iPTMnet" id="P51175"/>
<dbReference type="PhosphoSitePlus" id="P51175"/>
<dbReference type="SwissPalm" id="P51175"/>
<dbReference type="jPOST" id="P51175"/>
<dbReference type="PaxDb" id="10090-ENSMUSP00000072863"/>
<dbReference type="PeptideAtlas" id="P51175"/>
<dbReference type="ProteomicsDB" id="289741"/>
<dbReference type="Pumba" id="P51175"/>
<dbReference type="Antibodypedia" id="34299">
    <property type="antibodies" value="278 antibodies from 29 providers"/>
</dbReference>
<dbReference type="DNASU" id="19044"/>
<dbReference type="Ensembl" id="ENSMUST00000073120.11">
    <property type="protein sequence ID" value="ENSMUSP00000072863.5"/>
    <property type="gene ID" value="ENSMUSG00000062729.13"/>
</dbReference>
<dbReference type="GeneID" id="19044"/>
<dbReference type="KEGG" id="mmu:19044"/>
<dbReference type="UCSC" id="uc007dns.1">
    <property type="organism name" value="mouse"/>
</dbReference>
<dbReference type="AGR" id="MGI:104968"/>
<dbReference type="CTD" id="5498"/>
<dbReference type="MGI" id="MGI:104968">
    <property type="gene designation" value="Ppox"/>
</dbReference>
<dbReference type="VEuPathDB" id="HostDB:ENSMUSG00000062729"/>
<dbReference type="eggNOG" id="KOG1276">
    <property type="taxonomic scope" value="Eukaryota"/>
</dbReference>
<dbReference type="GeneTree" id="ENSGT00390000008744"/>
<dbReference type="HOGENOM" id="CLU_009629_2_1_1"/>
<dbReference type="InParanoid" id="P51175"/>
<dbReference type="OMA" id="WFDQWFG"/>
<dbReference type="OrthoDB" id="419752at2759"/>
<dbReference type="PhylomeDB" id="P51175"/>
<dbReference type="TreeFam" id="TF323479"/>
<dbReference type="Reactome" id="R-MMU-189451">
    <property type="pathway name" value="Heme biosynthesis"/>
</dbReference>
<dbReference type="UniPathway" id="UPA00251">
    <property type="reaction ID" value="UER00324"/>
</dbReference>
<dbReference type="BioGRID-ORCS" id="19044">
    <property type="hits" value="6 hits in 78 CRISPR screens"/>
</dbReference>
<dbReference type="ChiTaRS" id="Ppox">
    <property type="organism name" value="mouse"/>
</dbReference>
<dbReference type="PRO" id="PR:P51175"/>
<dbReference type="Proteomes" id="UP000000589">
    <property type="component" value="Chromosome 1"/>
</dbReference>
<dbReference type="RNAct" id="P51175">
    <property type="molecule type" value="protein"/>
</dbReference>
<dbReference type="Bgee" id="ENSMUSG00000062729">
    <property type="expression patterns" value="Expressed in fetal liver hematopoietic progenitor cell and 252 other cell types or tissues"/>
</dbReference>
<dbReference type="ExpressionAtlas" id="P51175">
    <property type="expression patterns" value="baseline and differential"/>
</dbReference>
<dbReference type="GO" id="GO:0005743">
    <property type="term" value="C:mitochondrial inner membrane"/>
    <property type="evidence" value="ECO:0000314"/>
    <property type="project" value="UniProtKB"/>
</dbReference>
<dbReference type="GO" id="GO:0005758">
    <property type="term" value="C:mitochondrial intermembrane space"/>
    <property type="evidence" value="ECO:0000314"/>
    <property type="project" value="MGI"/>
</dbReference>
<dbReference type="GO" id="GO:0031966">
    <property type="term" value="C:mitochondrial membrane"/>
    <property type="evidence" value="ECO:0000250"/>
    <property type="project" value="UniProtKB"/>
</dbReference>
<dbReference type="GO" id="GO:0005739">
    <property type="term" value="C:mitochondrion"/>
    <property type="evidence" value="ECO:0007005"/>
    <property type="project" value="MGI"/>
</dbReference>
<dbReference type="GO" id="GO:0004729">
    <property type="term" value="F:oxygen-dependent protoporphyrinogen oxidase activity"/>
    <property type="evidence" value="ECO:0000314"/>
    <property type="project" value="UniProtKB"/>
</dbReference>
<dbReference type="GO" id="GO:0006784">
    <property type="term" value="P:heme A biosynthetic process"/>
    <property type="evidence" value="ECO:0000314"/>
    <property type="project" value="MGI"/>
</dbReference>
<dbReference type="GO" id="GO:0006785">
    <property type="term" value="P:heme B biosynthetic process"/>
    <property type="evidence" value="ECO:0000314"/>
    <property type="project" value="MGI"/>
</dbReference>
<dbReference type="GO" id="GO:0006783">
    <property type="term" value="P:heme biosynthetic process"/>
    <property type="evidence" value="ECO:0000314"/>
    <property type="project" value="MGI"/>
</dbReference>
<dbReference type="GO" id="GO:0048034">
    <property type="term" value="P:heme O biosynthetic process"/>
    <property type="evidence" value="ECO:0000314"/>
    <property type="project" value="MGI"/>
</dbReference>
<dbReference type="GO" id="GO:0006779">
    <property type="term" value="P:porphyrin-containing compound biosynthetic process"/>
    <property type="evidence" value="ECO:0000250"/>
    <property type="project" value="UniProtKB"/>
</dbReference>
<dbReference type="GO" id="GO:0006782">
    <property type="term" value="P:protoporphyrinogen IX biosynthetic process"/>
    <property type="evidence" value="ECO:0007669"/>
    <property type="project" value="UniProtKB-UniPathway"/>
</dbReference>
<dbReference type="GO" id="GO:0009410">
    <property type="term" value="P:response to xenobiotic stimulus"/>
    <property type="evidence" value="ECO:0007669"/>
    <property type="project" value="Ensembl"/>
</dbReference>
<dbReference type="FunFam" id="3.50.50.60:FF:000133">
    <property type="entry name" value="Protoporphyrinogen oxidase"/>
    <property type="match status" value="1"/>
</dbReference>
<dbReference type="Gene3D" id="3.50.50.60">
    <property type="entry name" value="FAD/NAD(P)-binding domain"/>
    <property type="match status" value="1"/>
</dbReference>
<dbReference type="InterPro" id="IPR002937">
    <property type="entry name" value="Amino_oxidase"/>
</dbReference>
<dbReference type="InterPro" id="IPR036188">
    <property type="entry name" value="FAD/NAD-bd_sf"/>
</dbReference>
<dbReference type="InterPro" id="IPR004572">
    <property type="entry name" value="Protoporphyrinogen_oxidase"/>
</dbReference>
<dbReference type="InterPro" id="IPR050464">
    <property type="entry name" value="Zeta_carotene_desat/Oxidored"/>
</dbReference>
<dbReference type="NCBIfam" id="TIGR00562">
    <property type="entry name" value="proto_IX_ox"/>
    <property type="match status" value="1"/>
</dbReference>
<dbReference type="PANTHER" id="PTHR42923">
    <property type="entry name" value="PROTOPORPHYRINOGEN OXIDASE"/>
    <property type="match status" value="1"/>
</dbReference>
<dbReference type="PANTHER" id="PTHR42923:SF3">
    <property type="entry name" value="PROTOPORPHYRINOGEN OXIDASE"/>
    <property type="match status" value="1"/>
</dbReference>
<dbReference type="Pfam" id="PF01593">
    <property type="entry name" value="Amino_oxidase"/>
    <property type="match status" value="1"/>
</dbReference>
<dbReference type="SUPFAM" id="SSF54373">
    <property type="entry name" value="FAD-linked reductases, C-terminal domain"/>
    <property type="match status" value="1"/>
</dbReference>
<dbReference type="SUPFAM" id="SSF51905">
    <property type="entry name" value="FAD/NAD(P)-binding domain"/>
    <property type="match status" value="1"/>
</dbReference>
<protein>
    <recommendedName>
        <fullName>Protoporphyrinogen oxidase</fullName>
        <shortName>PPO</shortName>
        <ecNumber evidence="4">1.3.3.4</ecNumber>
    </recommendedName>
</protein>